<organism>
    <name type="scientific">Staphylococcus aureus (strain JH9)</name>
    <dbReference type="NCBI Taxonomy" id="359786"/>
    <lineage>
        <taxon>Bacteria</taxon>
        <taxon>Bacillati</taxon>
        <taxon>Bacillota</taxon>
        <taxon>Bacilli</taxon>
        <taxon>Bacillales</taxon>
        <taxon>Staphylococcaceae</taxon>
        <taxon>Staphylococcus</taxon>
    </lineage>
</organism>
<comment type="function">
    <text evidence="1">Transfers and isomerizes the ribose moiety from AdoMet to the 7-aminomethyl group of 7-deazaguanine (preQ1-tRNA) to give epoxyqueuosine (oQ-tRNA).</text>
</comment>
<comment type="catalytic activity">
    <reaction evidence="1">
        <text>7-aminomethyl-7-carbaguanosine(34) in tRNA + S-adenosyl-L-methionine = epoxyqueuosine(34) in tRNA + adenine + L-methionine + 2 H(+)</text>
        <dbReference type="Rhea" id="RHEA:32155"/>
        <dbReference type="Rhea" id="RHEA-COMP:10342"/>
        <dbReference type="Rhea" id="RHEA-COMP:18582"/>
        <dbReference type="ChEBI" id="CHEBI:15378"/>
        <dbReference type="ChEBI" id="CHEBI:16708"/>
        <dbReference type="ChEBI" id="CHEBI:57844"/>
        <dbReference type="ChEBI" id="CHEBI:59789"/>
        <dbReference type="ChEBI" id="CHEBI:82833"/>
        <dbReference type="ChEBI" id="CHEBI:194443"/>
        <dbReference type="EC" id="2.4.99.17"/>
    </reaction>
</comment>
<comment type="pathway">
    <text evidence="1">tRNA modification; tRNA-queuosine biosynthesis.</text>
</comment>
<comment type="subunit">
    <text evidence="1">Monomer.</text>
</comment>
<comment type="subcellular location">
    <subcellularLocation>
        <location evidence="1">Cytoplasm</location>
    </subcellularLocation>
</comment>
<comment type="similarity">
    <text evidence="1">Belongs to the QueA family.</text>
</comment>
<proteinExistence type="inferred from homology"/>
<dbReference type="EC" id="2.4.99.17" evidence="1"/>
<dbReference type="EMBL" id="CP000703">
    <property type="protein sequence ID" value="ABQ49487.1"/>
    <property type="molecule type" value="Genomic_DNA"/>
</dbReference>
<dbReference type="RefSeq" id="WP_001019178.1">
    <property type="nucleotide sequence ID" value="NC_009487.1"/>
</dbReference>
<dbReference type="SMR" id="A5ITG4"/>
<dbReference type="KEGG" id="saj:SaurJH9_1697"/>
<dbReference type="HOGENOM" id="CLU_039110_1_0_9"/>
<dbReference type="UniPathway" id="UPA00392"/>
<dbReference type="GO" id="GO:0005737">
    <property type="term" value="C:cytoplasm"/>
    <property type="evidence" value="ECO:0007669"/>
    <property type="project" value="UniProtKB-SubCell"/>
</dbReference>
<dbReference type="GO" id="GO:0051075">
    <property type="term" value="F:S-adenosylmethionine:tRNA ribosyltransferase-isomerase activity"/>
    <property type="evidence" value="ECO:0007669"/>
    <property type="project" value="UniProtKB-EC"/>
</dbReference>
<dbReference type="GO" id="GO:0008616">
    <property type="term" value="P:queuosine biosynthetic process"/>
    <property type="evidence" value="ECO:0007669"/>
    <property type="project" value="UniProtKB-UniRule"/>
</dbReference>
<dbReference type="GO" id="GO:0002099">
    <property type="term" value="P:tRNA wobble guanine modification"/>
    <property type="evidence" value="ECO:0007669"/>
    <property type="project" value="TreeGrafter"/>
</dbReference>
<dbReference type="FunFam" id="2.40.10.240:FF:000002">
    <property type="entry name" value="S-adenosylmethionine:tRNA ribosyltransferase-isomerase"/>
    <property type="match status" value="1"/>
</dbReference>
<dbReference type="FunFam" id="3.40.1780.10:FF:000001">
    <property type="entry name" value="S-adenosylmethionine:tRNA ribosyltransferase-isomerase"/>
    <property type="match status" value="1"/>
</dbReference>
<dbReference type="Gene3D" id="2.40.10.240">
    <property type="entry name" value="QueA-like"/>
    <property type="match status" value="1"/>
</dbReference>
<dbReference type="Gene3D" id="3.40.1780.10">
    <property type="entry name" value="QueA-like"/>
    <property type="match status" value="1"/>
</dbReference>
<dbReference type="HAMAP" id="MF_00113">
    <property type="entry name" value="QueA"/>
    <property type="match status" value="1"/>
</dbReference>
<dbReference type="InterPro" id="IPR003699">
    <property type="entry name" value="QueA"/>
</dbReference>
<dbReference type="InterPro" id="IPR042118">
    <property type="entry name" value="QueA_dom1"/>
</dbReference>
<dbReference type="InterPro" id="IPR042119">
    <property type="entry name" value="QueA_dom2"/>
</dbReference>
<dbReference type="InterPro" id="IPR036100">
    <property type="entry name" value="QueA_sf"/>
</dbReference>
<dbReference type="NCBIfam" id="NF001140">
    <property type="entry name" value="PRK00147.1"/>
    <property type="match status" value="1"/>
</dbReference>
<dbReference type="NCBIfam" id="TIGR00113">
    <property type="entry name" value="queA"/>
    <property type="match status" value="1"/>
</dbReference>
<dbReference type="PANTHER" id="PTHR30307">
    <property type="entry name" value="S-ADENOSYLMETHIONINE:TRNA RIBOSYLTRANSFERASE-ISOMERASE"/>
    <property type="match status" value="1"/>
</dbReference>
<dbReference type="PANTHER" id="PTHR30307:SF0">
    <property type="entry name" value="S-ADENOSYLMETHIONINE:TRNA RIBOSYLTRANSFERASE-ISOMERASE"/>
    <property type="match status" value="1"/>
</dbReference>
<dbReference type="Pfam" id="PF02547">
    <property type="entry name" value="Queuosine_synth"/>
    <property type="match status" value="1"/>
</dbReference>
<dbReference type="SUPFAM" id="SSF111337">
    <property type="entry name" value="QueA-like"/>
    <property type="match status" value="1"/>
</dbReference>
<gene>
    <name evidence="1" type="primary">queA</name>
    <name type="ordered locus">SaurJH9_1697</name>
</gene>
<accession>A5ITG4</accession>
<sequence length="341" mass="38970">MNIEEFDYDLPESLIAQTPLKDRDHSRLLVMDRETGEMKHLHFKDIIEYFRPGDTLVLNDTRVMPARLFGLKEETGAKVEMLMLTQIEGNDWEVLLKPAKRIKVGNKLNFGNGKIIAECIKEMDQGGRIMRLHYEGILQERLDELGEMPLPPYIKERLDDPDRYQTVYAKESGSAAAPTAGLHFTDELLTEIKNKGVNIAFVTLHVGLGTFRPVSVDDVNDHEMHSEYYQMTQETADLLNDTKSKGHRIISVGTTSTRTLETIRRDHDKFVETSGWTNIFIYPGFDFKAIDGQITNFHLPKSTLVMLVSAFSTRENVLNAYKTAVNLEYRFFSFGDAMLII</sequence>
<feature type="chain" id="PRO_1000076023" description="S-adenosylmethionine:tRNA ribosyltransferase-isomerase">
    <location>
        <begin position="1"/>
        <end position="341"/>
    </location>
</feature>
<reference key="1">
    <citation type="submission" date="2007-05" db="EMBL/GenBank/DDBJ databases">
        <title>Complete sequence of chromosome of Staphylococcus aureus subsp. aureus JH9.</title>
        <authorList>
            <consortium name="US DOE Joint Genome Institute"/>
            <person name="Copeland A."/>
            <person name="Lucas S."/>
            <person name="Lapidus A."/>
            <person name="Barry K."/>
            <person name="Detter J.C."/>
            <person name="Glavina del Rio T."/>
            <person name="Hammon N."/>
            <person name="Israni S."/>
            <person name="Pitluck S."/>
            <person name="Chain P."/>
            <person name="Malfatti S."/>
            <person name="Shin M."/>
            <person name="Vergez L."/>
            <person name="Schmutz J."/>
            <person name="Larimer F."/>
            <person name="Land M."/>
            <person name="Hauser L."/>
            <person name="Kyrpides N."/>
            <person name="Kim E."/>
            <person name="Tomasz A."/>
            <person name="Richardson P."/>
        </authorList>
    </citation>
    <scope>NUCLEOTIDE SEQUENCE [LARGE SCALE GENOMIC DNA]</scope>
    <source>
        <strain>JH9</strain>
    </source>
</reference>
<keyword id="KW-0963">Cytoplasm</keyword>
<keyword id="KW-0671">Queuosine biosynthesis</keyword>
<keyword id="KW-0949">S-adenosyl-L-methionine</keyword>
<keyword id="KW-0808">Transferase</keyword>
<name>QUEA_STAA9</name>
<protein>
    <recommendedName>
        <fullName evidence="1">S-adenosylmethionine:tRNA ribosyltransferase-isomerase</fullName>
        <ecNumber evidence="1">2.4.99.17</ecNumber>
    </recommendedName>
    <alternativeName>
        <fullName evidence="1">Queuosine biosynthesis protein QueA</fullName>
    </alternativeName>
</protein>
<evidence type="ECO:0000255" key="1">
    <source>
        <dbReference type="HAMAP-Rule" id="MF_00113"/>
    </source>
</evidence>